<proteinExistence type="inferred from homology"/>
<accession>A7ZSR4</accession>
<keyword id="KW-0028">Amino-acid biosynthesis</keyword>
<keyword id="KW-0057">Aromatic amino acid biosynthesis</keyword>
<keyword id="KW-0170">Cobalt</keyword>
<keyword id="KW-0963">Cytoplasm</keyword>
<keyword id="KW-0456">Lyase</keyword>
<keyword id="KW-0479">Metal-binding</keyword>
<keyword id="KW-0520">NAD</keyword>
<keyword id="KW-0547">Nucleotide-binding</keyword>
<keyword id="KW-1185">Reference proteome</keyword>
<keyword id="KW-0862">Zinc</keyword>
<comment type="function">
    <text evidence="1">Catalyzes the conversion of 3-deoxy-D-arabino-heptulosonate 7-phosphate (DAHP) to dehydroquinate (DHQ).</text>
</comment>
<comment type="catalytic activity">
    <reaction evidence="1">
        <text>7-phospho-2-dehydro-3-deoxy-D-arabino-heptonate = 3-dehydroquinate + phosphate</text>
        <dbReference type="Rhea" id="RHEA:21968"/>
        <dbReference type="ChEBI" id="CHEBI:32364"/>
        <dbReference type="ChEBI" id="CHEBI:43474"/>
        <dbReference type="ChEBI" id="CHEBI:58394"/>
        <dbReference type="EC" id="4.2.3.4"/>
    </reaction>
</comment>
<comment type="cofactor">
    <cofactor evidence="1">
        <name>Co(2+)</name>
        <dbReference type="ChEBI" id="CHEBI:48828"/>
    </cofactor>
    <cofactor evidence="1">
        <name>Zn(2+)</name>
        <dbReference type="ChEBI" id="CHEBI:29105"/>
    </cofactor>
    <text evidence="1">Binds 1 divalent metal cation per subunit. Can use either Co(2+) or Zn(2+).</text>
</comment>
<comment type="cofactor">
    <cofactor evidence="1">
        <name>NAD(+)</name>
        <dbReference type="ChEBI" id="CHEBI:57540"/>
    </cofactor>
</comment>
<comment type="pathway">
    <text evidence="1">Metabolic intermediate biosynthesis; chorismate biosynthesis; chorismate from D-erythrose 4-phosphate and phosphoenolpyruvate: step 2/7.</text>
</comment>
<comment type="subcellular location">
    <subcellularLocation>
        <location evidence="1">Cytoplasm</location>
    </subcellularLocation>
</comment>
<comment type="similarity">
    <text evidence="1">Belongs to the sugar phosphate cyclases superfamily. Dehydroquinate synthase family.</text>
</comment>
<feature type="chain" id="PRO_1000094505" description="3-dehydroquinate synthase">
    <location>
        <begin position="1"/>
        <end position="362"/>
    </location>
</feature>
<feature type="binding site" evidence="1">
    <location>
        <begin position="71"/>
        <end position="76"/>
    </location>
    <ligand>
        <name>NAD(+)</name>
        <dbReference type="ChEBI" id="CHEBI:57540"/>
    </ligand>
</feature>
<feature type="binding site" evidence="1">
    <location>
        <begin position="105"/>
        <end position="109"/>
    </location>
    <ligand>
        <name>NAD(+)</name>
        <dbReference type="ChEBI" id="CHEBI:57540"/>
    </ligand>
</feature>
<feature type="binding site" evidence="1">
    <location>
        <begin position="129"/>
        <end position="130"/>
    </location>
    <ligand>
        <name>NAD(+)</name>
        <dbReference type="ChEBI" id="CHEBI:57540"/>
    </ligand>
</feature>
<feature type="binding site" evidence="1">
    <location>
        <position position="142"/>
    </location>
    <ligand>
        <name>NAD(+)</name>
        <dbReference type="ChEBI" id="CHEBI:57540"/>
    </ligand>
</feature>
<feature type="binding site" evidence="1">
    <location>
        <position position="151"/>
    </location>
    <ligand>
        <name>NAD(+)</name>
        <dbReference type="ChEBI" id="CHEBI:57540"/>
    </ligand>
</feature>
<feature type="binding site" evidence="1">
    <location>
        <begin position="169"/>
        <end position="172"/>
    </location>
    <ligand>
        <name>NAD(+)</name>
        <dbReference type="ChEBI" id="CHEBI:57540"/>
    </ligand>
</feature>
<feature type="binding site" evidence="1">
    <location>
        <position position="184"/>
    </location>
    <ligand>
        <name>Zn(2+)</name>
        <dbReference type="ChEBI" id="CHEBI:29105"/>
    </ligand>
</feature>
<feature type="binding site" evidence="1">
    <location>
        <position position="247"/>
    </location>
    <ligand>
        <name>Zn(2+)</name>
        <dbReference type="ChEBI" id="CHEBI:29105"/>
    </ligand>
</feature>
<feature type="binding site" evidence="1">
    <location>
        <position position="264"/>
    </location>
    <ligand>
        <name>Zn(2+)</name>
        <dbReference type="ChEBI" id="CHEBI:29105"/>
    </ligand>
</feature>
<sequence length="362" mass="38863">MERIVVTLGERSYPITIASGLFNEPASFLPLKSGEQVMLVTNETLAPLYLDKVRGVLEQAGVNVDSVILPDGEQYKSLAVLDTVFTALLQKPHGRDTTLVALGGGVVGDLTGFAAASYQRGVRFIQVPTTLLSQVDSSVGGKTAVNHPLGKNMIGAFYQPASVVVDLDCLKTLPPRELASGLAEVIKYGIILDGAFFNWLEENLDALLRLDGPAMAYCIRRCCELKAEVVAADERETGLRALLNLGHTFGHAIEAEMGYGNWLHGEAVAAGMVMAARTSERLGQFSSAETQRIITLLKRAGLPVNGPREMSAQAYLPHMLRDKKVLAGEIRLILPLAIGKSEVRSGVSHELVLNAIADCQSA</sequence>
<organism>
    <name type="scientific">Escherichia coli O139:H28 (strain E24377A / ETEC)</name>
    <dbReference type="NCBI Taxonomy" id="331111"/>
    <lineage>
        <taxon>Bacteria</taxon>
        <taxon>Pseudomonadati</taxon>
        <taxon>Pseudomonadota</taxon>
        <taxon>Gammaproteobacteria</taxon>
        <taxon>Enterobacterales</taxon>
        <taxon>Enterobacteriaceae</taxon>
        <taxon>Escherichia</taxon>
    </lineage>
</organism>
<protein>
    <recommendedName>
        <fullName evidence="1">3-dehydroquinate synthase</fullName>
        <shortName evidence="1">DHQS</shortName>
        <ecNumber evidence="1">4.2.3.4</ecNumber>
    </recommendedName>
</protein>
<gene>
    <name evidence="1" type="primary">aroB</name>
    <name type="ordered locus">EcE24377A_3859</name>
</gene>
<name>AROB_ECO24</name>
<evidence type="ECO:0000255" key="1">
    <source>
        <dbReference type="HAMAP-Rule" id="MF_00110"/>
    </source>
</evidence>
<reference key="1">
    <citation type="journal article" date="2008" name="J. Bacteriol.">
        <title>The pangenome structure of Escherichia coli: comparative genomic analysis of E. coli commensal and pathogenic isolates.</title>
        <authorList>
            <person name="Rasko D.A."/>
            <person name="Rosovitz M.J."/>
            <person name="Myers G.S.A."/>
            <person name="Mongodin E.F."/>
            <person name="Fricke W.F."/>
            <person name="Gajer P."/>
            <person name="Crabtree J."/>
            <person name="Sebaihia M."/>
            <person name="Thomson N.R."/>
            <person name="Chaudhuri R."/>
            <person name="Henderson I.R."/>
            <person name="Sperandio V."/>
            <person name="Ravel J."/>
        </authorList>
    </citation>
    <scope>NUCLEOTIDE SEQUENCE [LARGE SCALE GENOMIC DNA]</scope>
    <source>
        <strain>E24377A / ETEC</strain>
    </source>
</reference>
<dbReference type="EC" id="4.2.3.4" evidence="1"/>
<dbReference type="EMBL" id="CP000800">
    <property type="protein sequence ID" value="ABV20582.1"/>
    <property type="molecule type" value="Genomic_DNA"/>
</dbReference>
<dbReference type="RefSeq" id="WP_000439846.1">
    <property type="nucleotide sequence ID" value="NC_009801.1"/>
</dbReference>
<dbReference type="SMR" id="A7ZSR4"/>
<dbReference type="GeneID" id="93778609"/>
<dbReference type="KEGG" id="ecw:EcE24377A_3859"/>
<dbReference type="HOGENOM" id="CLU_001201_0_2_6"/>
<dbReference type="UniPathway" id="UPA00053">
    <property type="reaction ID" value="UER00085"/>
</dbReference>
<dbReference type="Proteomes" id="UP000001122">
    <property type="component" value="Chromosome"/>
</dbReference>
<dbReference type="GO" id="GO:0005737">
    <property type="term" value="C:cytoplasm"/>
    <property type="evidence" value="ECO:0007669"/>
    <property type="project" value="UniProtKB-SubCell"/>
</dbReference>
<dbReference type="GO" id="GO:0003856">
    <property type="term" value="F:3-dehydroquinate synthase activity"/>
    <property type="evidence" value="ECO:0007669"/>
    <property type="project" value="UniProtKB-UniRule"/>
</dbReference>
<dbReference type="GO" id="GO:0046872">
    <property type="term" value="F:metal ion binding"/>
    <property type="evidence" value="ECO:0007669"/>
    <property type="project" value="UniProtKB-KW"/>
</dbReference>
<dbReference type="GO" id="GO:0000166">
    <property type="term" value="F:nucleotide binding"/>
    <property type="evidence" value="ECO:0007669"/>
    <property type="project" value="UniProtKB-KW"/>
</dbReference>
<dbReference type="GO" id="GO:0008652">
    <property type="term" value="P:amino acid biosynthetic process"/>
    <property type="evidence" value="ECO:0007669"/>
    <property type="project" value="UniProtKB-KW"/>
</dbReference>
<dbReference type="GO" id="GO:0009073">
    <property type="term" value="P:aromatic amino acid family biosynthetic process"/>
    <property type="evidence" value="ECO:0007669"/>
    <property type="project" value="UniProtKB-KW"/>
</dbReference>
<dbReference type="GO" id="GO:0009423">
    <property type="term" value="P:chorismate biosynthetic process"/>
    <property type="evidence" value="ECO:0007669"/>
    <property type="project" value="UniProtKB-UniRule"/>
</dbReference>
<dbReference type="CDD" id="cd08195">
    <property type="entry name" value="DHQS"/>
    <property type="match status" value="1"/>
</dbReference>
<dbReference type="FunFam" id="1.20.1090.10:FF:000002">
    <property type="entry name" value="3-dehydroquinate synthase"/>
    <property type="match status" value="1"/>
</dbReference>
<dbReference type="FunFam" id="3.40.50.1970:FF:000001">
    <property type="entry name" value="3-dehydroquinate synthase"/>
    <property type="match status" value="1"/>
</dbReference>
<dbReference type="Gene3D" id="3.40.50.1970">
    <property type="match status" value="1"/>
</dbReference>
<dbReference type="Gene3D" id="1.20.1090.10">
    <property type="entry name" value="Dehydroquinate synthase-like - alpha domain"/>
    <property type="match status" value="1"/>
</dbReference>
<dbReference type="HAMAP" id="MF_00110">
    <property type="entry name" value="DHQ_synthase"/>
    <property type="match status" value="1"/>
</dbReference>
<dbReference type="InterPro" id="IPR050071">
    <property type="entry name" value="Dehydroquinate_synthase"/>
</dbReference>
<dbReference type="InterPro" id="IPR016037">
    <property type="entry name" value="DHQ_synth_AroB"/>
</dbReference>
<dbReference type="InterPro" id="IPR030963">
    <property type="entry name" value="DHQ_synth_fam"/>
</dbReference>
<dbReference type="InterPro" id="IPR030960">
    <property type="entry name" value="DHQS/DOIS_N"/>
</dbReference>
<dbReference type="InterPro" id="IPR056179">
    <property type="entry name" value="DHQS_C"/>
</dbReference>
<dbReference type="NCBIfam" id="TIGR01357">
    <property type="entry name" value="aroB"/>
    <property type="match status" value="1"/>
</dbReference>
<dbReference type="PANTHER" id="PTHR43622">
    <property type="entry name" value="3-DEHYDROQUINATE SYNTHASE"/>
    <property type="match status" value="1"/>
</dbReference>
<dbReference type="PANTHER" id="PTHR43622:SF7">
    <property type="entry name" value="3-DEHYDROQUINATE SYNTHASE, CHLOROPLASTIC"/>
    <property type="match status" value="1"/>
</dbReference>
<dbReference type="Pfam" id="PF01761">
    <property type="entry name" value="DHQ_synthase"/>
    <property type="match status" value="1"/>
</dbReference>
<dbReference type="Pfam" id="PF24621">
    <property type="entry name" value="DHQS_C"/>
    <property type="match status" value="1"/>
</dbReference>
<dbReference type="PIRSF" id="PIRSF001455">
    <property type="entry name" value="DHQ_synth"/>
    <property type="match status" value="1"/>
</dbReference>
<dbReference type="SUPFAM" id="SSF56796">
    <property type="entry name" value="Dehydroquinate synthase-like"/>
    <property type="match status" value="1"/>
</dbReference>